<sequence length="189" mass="20695">MAQERRPQREDRQSREERDSEFVDKLVAINRVAKVVKGGRRFGFAALVVVGDQKGRVGFGHGKAREVPEAIRKATEAAKRELIFVPLRDGRTLHHDVHGRHGAGKVLLRSAKVGTGIIAGGPMRAVFETLGMHDVVAKSTGSSNPYNMVRATFDALKHQVHPKDIAAQRGIKYATLQARRSASGNASEE</sequence>
<proteinExistence type="inferred from homology"/>
<feature type="chain" id="PRO_1000140889" description="Small ribosomal subunit protein uS5">
    <location>
        <begin position="1"/>
        <end position="189"/>
    </location>
</feature>
<feature type="domain" description="S5 DRBM" evidence="1">
    <location>
        <begin position="22"/>
        <end position="85"/>
    </location>
</feature>
<reference key="1">
    <citation type="journal article" date="2010" name="Stand. Genomic Sci.">
        <title>Complete genome sequence of Rhizobium leguminosarum bv trifolii strain WSM2304, an effective microsymbiont of the South American clover Trifolium polymorphum.</title>
        <authorList>
            <person name="Reeve W."/>
            <person name="O'Hara G."/>
            <person name="Chain P."/>
            <person name="Ardley J."/>
            <person name="Brau L."/>
            <person name="Nandesena K."/>
            <person name="Tiwari R."/>
            <person name="Malfatti S."/>
            <person name="Kiss H."/>
            <person name="Lapidus A."/>
            <person name="Copeland A."/>
            <person name="Nolan M."/>
            <person name="Land M."/>
            <person name="Ivanova N."/>
            <person name="Mavromatis K."/>
            <person name="Markowitz V."/>
            <person name="Kyrpides N."/>
            <person name="Melino V."/>
            <person name="Denton M."/>
            <person name="Yates R."/>
            <person name="Howieson J."/>
        </authorList>
    </citation>
    <scope>NUCLEOTIDE SEQUENCE [LARGE SCALE GENOMIC DNA]</scope>
    <source>
        <strain>WSM2304</strain>
    </source>
</reference>
<name>RS5_RHILW</name>
<accession>B5ZYV2</accession>
<protein>
    <recommendedName>
        <fullName evidence="1">Small ribosomal subunit protein uS5</fullName>
    </recommendedName>
    <alternativeName>
        <fullName evidence="2">30S ribosomal protein S5</fullName>
    </alternativeName>
</protein>
<keyword id="KW-1185">Reference proteome</keyword>
<keyword id="KW-0687">Ribonucleoprotein</keyword>
<keyword id="KW-0689">Ribosomal protein</keyword>
<keyword id="KW-0694">RNA-binding</keyword>
<keyword id="KW-0699">rRNA-binding</keyword>
<evidence type="ECO:0000255" key="1">
    <source>
        <dbReference type="HAMAP-Rule" id="MF_01307"/>
    </source>
</evidence>
<evidence type="ECO:0000305" key="2"/>
<organism>
    <name type="scientific">Rhizobium leguminosarum bv. trifolii (strain WSM2304)</name>
    <dbReference type="NCBI Taxonomy" id="395492"/>
    <lineage>
        <taxon>Bacteria</taxon>
        <taxon>Pseudomonadati</taxon>
        <taxon>Pseudomonadota</taxon>
        <taxon>Alphaproteobacteria</taxon>
        <taxon>Hyphomicrobiales</taxon>
        <taxon>Rhizobiaceae</taxon>
        <taxon>Rhizobium/Agrobacterium group</taxon>
        <taxon>Rhizobium</taxon>
    </lineage>
</organism>
<dbReference type="EMBL" id="CP001191">
    <property type="protein sequence ID" value="ACI54643.1"/>
    <property type="molecule type" value="Genomic_DNA"/>
</dbReference>
<dbReference type="RefSeq" id="WP_003573784.1">
    <property type="nucleotide sequence ID" value="NC_011369.1"/>
</dbReference>
<dbReference type="SMR" id="B5ZYV2"/>
<dbReference type="STRING" id="395492.Rleg2_1349"/>
<dbReference type="GeneID" id="91148145"/>
<dbReference type="KEGG" id="rlt:Rleg2_1349"/>
<dbReference type="eggNOG" id="COG0098">
    <property type="taxonomic scope" value="Bacteria"/>
</dbReference>
<dbReference type="HOGENOM" id="CLU_065898_2_2_5"/>
<dbReference type="Proteomes" id="UP000008330">
    <property type="component" value="Chromosome"/>
</dbReference>
<dbReference type="GO" id="GO:0015935">
    <property type="term" value="C:small ribosomal subunit"/>
    <property type="evidence" value="ECO:0007669"/>
    <property type="project" value="InterPro"/>
</dbReference>
<dbReference type="GO" id="GO:0019843">
    <property type="term" value="F:rRNA binding"/>
    <property type="evidence" value="ECO:0007669"/>
    <property type="project" value="UniProtKB-UniRule"/>
</dbReference>
<dbReference type="GO" id="GO:0003735">
    <property type="term" value="F:structural constituent of ribosome"/>
    <property type="evidence" value="ECO:0007669"/>
    <property type="project" value="InterPro"/>
</dbReference>
<dbReference type="GO" id="GO:0006412">
    <property type="term" value="P:translation"/>
    <property type="evidence" value="ECO:0007669"/>
    <property type="project" value="UniProtKB-UniRule"/>
</dbReference>
<dbReference type="FunFam" id="3.30.160.20:FF:000001">
    <property type="entry name" value="30S ribosomal protein S5"/>
    <property type="match status" value="1"/>
</dbReference>
<dbReference type="FunFam" id="3.30.230.10:FF:000002">
    <property type="entry name" value="30S ribosomal protein S5"/>
    <property type="match status" value="1"/>
</dbReference>
<dbReference type="Gene3D" id="3.30.160.20">
    <property type="match status" value="1"/>
</dbReference>
<dbReference type="Gene3D" id="3.30.230.10">
    <property type="match status" value="1"/>
</dbReference>
<dbReference type="HAMAP" id="MF_01307_B">
    <property type="entry name" value="Ribosomal_uS5_B"/>
    <property type="match status" value="1"/>
</dbReference>
<dbReference type="InterPro" id="IPR020568">
    <property type="entry name" value="Ribosomal_Su5_D2-typ_SF"/>
</dbReference>
<dbReference type="InterPro" id="IPR000851">
    <property type="entry name" value="Ribosomal_uS5"/>
</dbReference>
<dbReference type="InterPro" id="IPR005712">
    <property type="entry name" value="Ribosomal_uS5_bac-type"/>
</dbReference>
<dbReference type="InterPro" id="IPR005324">
    <property type="entry name" value="Ribosomal_uS5_C"/>
</dbReference>
<dbReference type="InterPro" id="IPR013810">
    <property type="entry name" value="Ribosomal_uS5_N"/>
</dbReference>
<dbReference type="InterPro" id="IPR018192">
    <property type="entry name" value="Ribosomal_uS5_N_CS"/>
</dbReference>
<dbReference type="InterPro" id="IPR014721">
    <property type="entry name" value="Ribsml_uS5_D2-typ_fold_subgr"/>
</dbReference>
<dbReference type="NCBIfam" id="TIGR01021">
    <property type="entry name" value="rpsE_bact"/>
    <property type="match status" value="1"/>
</dbReference>
<dbReference type="PANTHER" id="PTHR48277">
    <property type="entry name" value="MITOCHONDRIAL RIBOSOMAL PROTEIN S5"/>
    <property type="match status" value="1"/>
</dbReference>
<dbReference type="PANTHER" id="PTHR48277:SF1">
    <property type="entry name" value="MITOCHONDRIAL RIBOSOMAL PROTEIN S5"/>
    <property type="match status" value="1"/>
</dbReference>
<dbReference type="Pfam" id="PF00333">
    <property type="entry name" value="Ribosomal_S5"/>
    <property type="match status" value="1"/>
</dbReference>
<dbReference type="Pfam" id="PF03719">
    <property type="entry name" value="Ribosomal_S5_C"/>
    <property type="match status" value="1"/>
</dbReference>
<dbReference type="SUPFAM" id="SSF54768">
    <property type="entry name" value="dsRNA-binding domain-like"/>
    <property type="match status" value="1"/>
</dbReference>
<dbReference type="SUPFAM" id="SSF54211">
    <property type="entry name" value="Ribosomal protein S5 domain 2-like"/>
    <property type="match status" value="1"/>
</dbReference>
<dbReference type="PROSITE" id="PS00585">
    <property type="entry name" value="RIBOSOMAL_S5"/>
    <property type="match status" value="1"/>
</dbReference>
<dbReference type="PROSITE" id="PS50881">
    <property type="entry name" value="S5_DSRBD"/>
    <property type="match status" value="1"/>
</dbReference>
<gene>
    <name evidence="1" type="primary">rpsE</name>
    <name type="ordered locus">Rleg2_1349</name>
</gene>
<comment type="function">
    <text evidence="1">With S4 and S12 plays an important role in translational accuracy.</text>
</comment>
<comment type="function">
    <text evidence="1">Located at the back of the 30S subunit body where it stabilizes the conformation of the head with respect to the body.</text>
</comment>
<comment type="subunit">
    <text evidence="1">Part of the 30S ribosomal subunit. Contacts proteins S4 and S8.</text>
</comment>
<comment type="domain">
    <text>The N-terminal domain interacts with the head of the 30S subunit; the C-terminal domain interacts with the body and contacts protein S4. The interaction surface between S4 and S5 is involved in control of translational fidelity.</text>
</comment>
<comment type="similarity">
    <text evidence="1">Belongs to the universal ribosomal protein uS5 family.</text>
</comment>